<keyword id="KW-1185">Reference proteome</keyword>
<sequence length="724" mass="81941">MRVQILDLPSFGYHFITQTHIPRGKDEYYLRFSQSAEPPRAWRPLSKEEIHTLIQKGNHCDTWHDVLVADPFDASLIRNSSFAGLVRIASLERRLLRYHDFTVPTGITHSTLISCDVGENCAIHHCAYISHYIIGNHVILSRIDELCTTNHAKFGAGIIKDGEQEAVRITIDPLNETGGRKIFPFVGMIAADAFLWACHRDRTLLMQRFESMTQQQHDTRRGYYGTIETQSVIKSCRIIKDVCFGPGSYVKGANKLKNLTVQSSLQEPTQIGEGVELVNGVIGYGCRVFYGVKAVRFVLGNNCALKYGTRLIHSVLGDNSTISCCEVLNALIFPYHEQHHNNSFLIAALIRGQSNIAAGSTIGSNHNTRKNDGEIIAGRGFWSGLASTLKHNCRFASFVLITGKNYPAELDIPFPFSLVTNNERENRLEIMPAYYWLYNMYAIERNEKKFAARDKRKTKTQTVEISVFAPDTIGEIENALALLDSAIERAWVNAGNSALTAEDIVLKHPTKAQTIPVLLTGIEHSTRSTLVLKPLEARKAYRDILIWYCTKTLLSFFEQTTRCISHFTSHDPKTITHNWVNMGGQLVPEDKFETLLQNIETGKFKSWHHIHKEYDALAATYETDKALHAYAVLCSLARTRIDAPLLCTYVQHAITIEKYRVTQIHKTRCKDYLNPFREITYRNPLERNAVLGTPEEDQLIRTTEEESAHLCALYARYIAPPHLG</sequence>
<name>Y851_TREPA</name>
<reference key="1">
    <citation type="journal article" date="1998" name="Science">
        <title>Complete genome sequence of Treponema pallidum, the syphilis spirochete.</title>
        <authorList>
            <person name="Fraser C.M."/>
            <person name="Norris S.J."/>
            <person name="Weinstock G.M."/>
            <person name="White O."/>
            <person name="Sutton G.G."/>
            <person name="Dodson R.J."/>
            <person name="Gwinn M.L."/>
            <person name="Hickey E.K."/>
            <person name="Clayton R.A."/>
            <person name="Ketchum K.A."/>
            <person name="Sodergren E."/>
            <person name="Hardham J.M."/>
            <person name="McLeod M.P."/>
            <person name="Salzberg S.L."/>
            <person name="Peterson J.D."/>
            <person name="Khalak H.G."/>
            <person name="Richardson D.L."/>
            <person name="Howell J.K."/>
            <person name="Chidambaram M."/>
            <person name="Utterback T.R."/>
            <person name="McDonald L.A."/>
            <person name="Artiach P."/>
            <person name="Bowman C."/>
            <person name="Cotton M.D."/>
            <person name="Fujii C."/>
            <person name="Garland S.A."/>
            <person name="Hatch B."/>
            <person name="Horst K."/>
            <person name="Roberts K.M."/>
            <person name="Sandusky M."/>
            <person name="Weidman J.F."/>
            <person name="Smith H.O."/>
            <person name="Venter J.C."/>
        </authorList>
    </citation>
    <scope>NUCLEOTIDE SEQUENCE [LARGE SCALE GENOMIC DNA]</scope>
    <source>
        <strain>Nichols</strain>
    </source>
</reference>
<dbReference type="EMBL" id="AE000520">
    <property type="protein sequence ID" value="AAC65821.1"/>
    <property type="molecule type" value="Genomic_DNA"/>
</dbReference>
<dbReference type="PIR" id="C71274">
    <property type="entry name" value="C71274"/>
</dbReference>
<dbReference type="RefSeq" id="WP_010882295.1">
    <property type="nucleotide sequence ID" value="NC_021490.2"/>
</dbReference>
<dbReference type="SMR" id="O83823"/>
<dbReference type="IntAct" id="O83823">
    <property type="interactions" value="1"/>
</dbReference>
<dbReference type="STRING" id="243276.TP_0851"/>
<dbReference type="EnsemblBacteria" id="AAC65821">
    <property type="protein sequence ID" value="AAC65821"/>
    <property type="gene ID" value="TP_0851"/>
</dbReference>
<dbReference type="KEGG" id="tpa:TP_0851"/>
<dbReference type="KEGG" id="tpw:TPANIC_0851"/>
<dbReference type="eggNOG" id="COG1208">
    <property type="taxonomic scope" value="Bacteria"/>
</dbReference>
<dbReference type="HOGENOM" id="CLU_382600_0_0_12"/>
<dbReference type="OrthoDB" id="9808076at2"/>
<dbReference type="Proteomes" id="UP000000811">
    <property type="component" value="Chromosome"/>
</dbReference>
<dbReference type="Gene3D" id="2.160.10.10">
    <property type="entry name" value="Hexapeptide repeat proteins"/>
    <property type="match status" value="1"/>
</dbReference>
<dbReference type="InterPro" id="IPR032533">
    <property type="entry name" value="DUF4954"/>
</dbReference>
<dbReference type="InterPro" id="IPR049208">
    <property type="entry name" value="DUF6819"/>
</dbReference>
<dbReference type="InterPro" id="IPR011004">
    <property type="entry name" value="Trimer_LpxA-like_sf"/>
</dbReference>
<dbReference type="Pfam" id="PF16314">
    <property type="entry name" value="DUF4954"/>
    <property type="match status" value="1"/>
</dbReference>
<dbReference type="Pfam" id="PF20683">
    <property type="entry name" value="DUF6819"/>
    <property type="match status" value="1"/>
</dbReference>
<dbReference type="SUPFAM" id="SSF51161">
    <property type="entry name" value="Trimeric LpxA-like enzymes"/>
    <property type="match status" value="1"/>
</dbReference>
<accession>O83823</accession>
<proteinExistence type="predicted"/>
<feature type="chain" id="PRO_0000202339" description="Uncharacterized protein TP_0851">
    <location>
        <begin position="1"/>
        <end position="724"/>
    </location>
</feature>
<protein>
    <recommendedName>
        <fullName>Uncharacterized protein TP_0851</fullName>
    </recommendedName>
</protein>
<organism>
    <name type="scientific">Treponema pallidum (strain Nichols)</name>
    <dbReference type="NCBI Taxonomy" id="243276"/>
    <lineage>
        <taxon>Bacteria</taxon>
        <taxon>Pseudomonadati</taxon>
        <taxon>Spirochaetota</taxon>
        <taxon>Spirochaetia</taxon>
        <taxon>Spirochaetales</taxon>
        <taxon>Treponemataceae</taxon>
        <taxon>Treponema</taxon>
    </lineage>
</organism>
<gene>
    <name type="ordered locus">TP_0851</name>
</gene>